<comment type="function">
    <text evidence="2 3">Part of the tripartite ATP-independent periplasmic (TRAP) transport system SiaPQM that catalyzes unidirectional Na(+)-dependent sialic acid uptake.</text>
</comment>
<comment type="subunit">
    <text evidence="2">The complex comprises the extracytoplasmic solute receptor protein SiaP, and the two transmembrane proteins SiaQ and SiaM. SiaQ and SiaM form a tight 1:1 complex.</text>
</comment>
<comment type="subcellular location">
    <subcellularLocation>
        <location evidence="2">Cell inner membrane</location>
        <topology evidence="1">Multi-pass membrane protein</topology>
    </subcellularLocation>
</comment>
<comment type="similarity">
    <text evidence="5">Belongs to the TRAP transporter small permease family.</text>
</comment>
<organism>
    <name type="scientific">Vibrio cholerae serotype O1 (strain ATCC 39315 / El Tor Inaba N16961)</name>
    <dbReference type="NCBI Taxonomy" id="243277"/>
    <lineage>
        <taxon>Bacteria</taxon>
        <taxon>Pseudomonadati</taxon>
        <taxon>Pseudomonadota</taxon>
        <taxon>Gammaproteobacteria</taxon>
        <taxon>Vibrionales</taxon>
        <taxon>Vibrionaceae</taxon>
        <taxon>Vibrio</taxon>
    </lineage>
</organism>
<keyword id="KW-0997">Cell inner membrane</keyword>
<keyword id="KW-1003">Cell membrane</keyword>
<keyword id="KW-0472">Membrane</keyword>
<keyword id="KW-1185">Reference proteome</keyword>
<keyword id="KW-0762">Sugar transport</keyword>
<keyword id="KW-0812">Transmembrane</keyword>
<keyword id="KW-1133">Transmembrane helix</keyword>
<keyword id="KW-0813">Transport</keyword>
<sequence>MELKMLRKIINNIEEIITVPLMAALLAVLTWQIGTRWLLNDPSLWSEELARLLFMYMCLVGCAIAIKRSSHVNITFFSDKLPEKARLSLVLSLEIAVLVSIGAIIVLGYQHAQRNAFFELITLGISSSWMNYSLPVGGVFMVFRQLEKIFNLMKLLLGVSSSASLIDQQVTER</sequence>
<evidence type="ECO:0000255" key="1"/>
<evidence type="ECO:0000269" key="2">
    <source>
    </source>
</evidence>
<evidence type="ECO:0000269" key="3">
    <source>
    </source>
</evidence>
<evidence type="ECO:0000303" key="4">
    <source>
    </source>
</evidence>
<evidence type="ECO:0000305" key="5"/>
<evidence type="ECO:0000312" key="6">
    <source>
        <dbReference type="EMBL" id="AAF94927.1"/>
    </source>
</evidence>
<proteinExistence type="evidence at protein level"/>
<reference key="1">
    <citation type="journal article" date="2000" name="Nature">
        <title>DNA sequence of both chromosomes of the cholera pathogen Vibrio cholerae.</title>
        <authorList>
            <person name="Heidelberg J.F."/>
            <person name="Eisen J.A."/>
            <person name="Nelson W.C."/>
            <person name="Clayton R.A."/>
            <person name="Gwinn M.L."/>
            <person name="Dodson R.J."/>
            <person name="Haft D.H."/>
            <person name="Hickey E.K."/>
            <person name="Peterson J.D."/>
            <person name="Umayam L.A."/>
            <person name="Gill S.R."/>
            <person name="Nelson K.E."/>
            <person name="Read T.D."/>
            <person name="Tettelin H."/>
            <person name="Richardson D.L."/>
            <person name="Ermolaeva M.D."/>
            <person name="Vamathevan J.J."/>
            <person name="Bass S."/>
            <person name="Qin H."/>
            <person name="Dragoi I."/>
            <person name="Sellers P."/>
            <person name="McDonald L.A."/>
            <person name="Utterback T.R."/>
            <person name="Fleischmann R.D."/>
            <person name="Nierman W.C."/>
            <person name="White O."/>
            <person name="Salzberg S.L."/>
            <person name="Smith H.O."/>
            <person name="Colwell R.R."/>
            <person name="Mekalanos J.J."/>
            <person name="Venter J.C."/>
            <person name="Fraser C.M."/>
        </authorList>
    </citation>
    <scope>NUCLEOTIDE SEQUENCE [LARGE SCALE GENOMIC DNA]</scope>
    <source>
        <strain>ATCC 39315 / El Tor Inaba N16961</strain>
    </source>
</reference>
<reference key="2">
    <citation type="journal article" date="2012" name="J. Biol. Chem.">
        <title>The membrane proteins SiaQ and SiaM form an essential stoichiometric complex in the sialic acid tripartite ATP-independent periplasmic (TRAP) transporter SiaPQM (VC1777-1779) from Vibrio cholerae.</title>
        <authorList>
            <person name="Mulligan C."/>
            <person name="Leech A.P."/>
            <person name="Kelly D.J."/>
            <person name="Thomas G.H."/>
        </authorList>
    </citation>
    <scope>FUNCTION</scope>
    <scope>SUBUNIT</scope>
    <scope>SUBCELLULAR LOCATION</scope>
</reference>
<reference key="3">
    <citation type="journal article" date="2012" name="Microbiology">
        <title>The VC1777-VC1779 proteins are members of a sialic acid-specific subfamily of TRAP transporters (SiaPQM) and constitute the sole route of sialic acid uptake in the human pathogen Vibrio cholerae.</title>
        <authorList>
            <person name="Chowdhury N."/>
            <person name="Norris J."/>
            <person name="McAlister E."/>
            <person name="Lau S.Y."/>
            <person name="Thomas G.H."/>
            <person name="Boyd E.F."/>
        </authorList>
    </citation>
    <scope>FUNCTION</scope>
</reference>
<feature type="chain" id="PRO_0000435367" description="Sialic acid TRAP transporter small permease protein SiaQ">
    <location>
        <begin position="1"/>
        <end position="173"/>
    </location>
</feature>
<feature type="transmembrane region" description="Helical" evidence="1">
    <location>
        <begin position="13"/>
        <end position="33"/>
    </location>
</feature>
<feature type="transmembrane region" description="Helical" evidence="1">
    <location>
        <begin position="46"/>
        <end position="66"/>
    </location>
</feature>
<feature type="transmembrane region" description="Helical" evidence="1">
    <location>
        <begin position="87"/>
        <end position="107"/>
    </location>
</feature>
<feature type="transmembrane region" description="Helical" evidence="1">
    <location>
        <begin position="123"/>
        <end position="143"/>
    </location>
</feature>
<accession>Q9KR65</accession>
<name>SIAQ_VIBCH</name>
<protein>
    <recommendedName>
        <fullName evidence="5">Sialic acid TRAP transporter small permease protein SiaQ</fullName>
    </recommendedName>
</protein>
<dbReference type="EMBL" id="AE003852">
    <property type="protein sequence ID" value="AAF94927.1"/>
    <property type="molecule type" value="Genomic_DNA"/>
</dbReference>
<dbReference type="PIR" id="G82157">
    <property type="entry name" value="G82157"/>
</dbReference>
<dbReference type="RefSeq" id="NP_231413.1">
    <property type="nucleotide sequence ID" value="NC_002505.1"/>
</dbReference>
<dbReference type="RefSeq" id="WP_001889698.1">
    <property type="nucleotide sequence ID" value="NZ_LT906614.1"/>
</dbReference>
<dbReference type="SMR" id="Q9KR65"/>
<dbReference type="STRING" id="243277.VC_1778"/>
<dbReference type="DNASU" id="2613658"/>
<dbReference type="EnsemblBacteria" id="AAF94927">
    <property type="protein sequence ID" value="AAF94927"/>
    <property type="gene ID" value="VC_1778"/>
</dbReference>
<dbReference type="KEGG" id="vch:VC_1778"/>
<dbReference type="PATRIC" id="fig|243277.26.peg.1698"/>
<dbReference type="eggNOG" id="COG3090">
    <property type="taxonomic scope" value="Bacteria"/>
</dbReference>
<dbReference type="HOGENOM" id="CLU_086356_9_2_6"/>
<dbReference type="Proteomes" id="UP000000584">
    <property type="component" value="Chromosome 1"/>
</dbReference>
<dbReference type="GO" id="GO:0005886">
    <property type="term" value="C:plasma membrane"/>
    <property type="evidence" value="ECO:0000318"/>
    <property type="project" value="GO_Central"/>
</dbReference>
<dbReference type="GO" id="GO:0022857">
    <property type="term" value="F:transmembrane transporter activity"/>
    <property type="evidence" value="ECO:0000318"/>
    <property type="project" value="GO_Central"/>
</dbReference>
<dbReference type="GO" id="GO:0015740">
    <property type="term" value="P:C4-dicarboxylate transport"/>
    <property type="evidence" value="ECO:0000318"/>
    <property type="project" value="GO_Central"/>
</dbReference>
<dbReference type="InterPro" id="IPR055348">
    <property type="entry name" value="DctQ"/>
</dbReference>
<dbReference type="InterPro" id="IPR007387">
    <property type="entry name" value="TRAP_DctQ"/>
</dbReference>
<dbReference type="PANTHER" id="PTHR35011">
    <property type="entry name" value="2,3-DIKETO-L-GULONATE TRAP TRANSPORTER SMALL PERMEASE PROTEIN YIAM"/>
    <property type="match status" value="1"/>
</dbReference>
<dbReference type="PANTHER" id="PTHR35011:SF5">
    <property type="entry name" value="SIALIC ACID TRAP TRANSPORTER SMALL PERMEASE PROTEIN SIAQ"/>
    <property type="match status" value="1"/>
</dbReference>
<dbReference type="Pfam" id="PF04290">
    <property type="entry name" value="DctQ"/>
    <property type="match status" value="1"/>
</dbReference>
<gene>
    <name evidence="4" type="primary">siaQ</name>
    <name evidence="6" type="ordered locus">VC_1778</name>
</gene>